<accession>P56409</accession>
<feature type="chain" id="PRO_0000155458" description="Ornithodorin">
    <location>
        <begin position="1"/>
        <end position="119"/>
    </location>
</feature>
<feature type="domain" description="BPTI/Kunitz inhibitor 1" evidence="2 6">
    <location>
        <begin position="1"/>
        <end position="53"/>
    </location>
</feature>
<feature type="domain" description="BPTI/Kunitz inhibitor 2" evidence="6">
    <location>
        <begin position="61"/>
        <end position="116"/>
    </location>
</feature>
<feature type="region of interest" description="Linker">
    <location>
        <begin position="54"/>
        <end position="60"/>
    </location>
</feature>
<feature type="disulfide bond" evidence="3 7">
    <location>
        <begin position="5"/>
        <end position="50"/>
    </location>
</feature>
<feature type="disulfide bond" evidence="3 7">
    <location>
        <begin position="13"/>
        <end position="35"/>
    </location>
</feature>
<feature type="disulfide bond" evidence="3 7">
    <location>
        <begin position="29"/>
        <end position="46"/>
    </location>
</feature>
<feature type="disulfide bond" evidence="3 7">
    <location>
        <begin position="65"/>
        <end position="113"/>
    </location>
</feature>
<feature type="disulfide bond" evidence="3 7">
    <location>
        <begin position="73"/>
        <end position="96"/>
    </location>
</feature>
<feature type="disulfide bond" evidence="3 7">
    <location>
        <begin position="89"/>
        <end position="109"/>
    </location>
</feature>
<feature type="helix" evidence="8">
    <location>
        <begin position="3"/>
        <end position="5"/>
    </location>
</feature>
<feature type="strand" evidence="8">
    <location>
        <begin position="18"/>
        <end position="25"/>
    </location>
</feature>
<feature type="strand" evidence="8">
    <location>
        <begin position="28"/>
        <end position="35"/>
    </location>
</feature>
<feature type="strand" evidence="8">
    <location>
        <begin position="38"/>
        <end position="42"/>
    </location>
</feature>
<feature type="helix" evidence="8">
    <location>
        <begin position="43"/>
        <end position="49"/>
    </location>
</feature>
<feature type="helix" evidence="8">
    <location>
        <begin position="63"/>
        <end position="66"/>
    </location>
</feature>
<feature type="strand" evidence="8">
    <location>
        <begin position="77"/>
        <end position="83"/>
    </location>
</feature>
<feature type="turn" evidence="8">
    <location>
        <begin position="84"/>
        <end position="87"/>
    </location>
</feature>
<feature type="strand" evidence="8">
    <location>
        <begin position="88"/>
        <end position="96"/>
    </location>
</feature>
<feature type="strand" evidence="8">
    <location>
        <begin position="98"/>
        <end position="100"/>
    </location>
</feature>
<feature type="strand" evidence="8">
    <location>
        <begin position="103"/>
        <end position="105"/>
    </location>
</feature>
<feature type="helix" evidence="8">
    <location>
        <begin position="106"/>
        <end position="112"/>
    </location>
</feature>
<keyword id="KW-0002">3D-structure</keyword>
<keyword id="KW-1203">Blood coagulation cascade inhibiting toxin</keyword>
<keyword id="KW-0968">Cytoplasmic vesicle</keyword>
<keyword id="KW-1015">Disulfide bond</keyword>
<keyword id="KW-1199">Hemostasis impairing toxin</keyword>
<keyword id="KW-0646">Protease inhibitor</keyword>
<keyword id="KW-0677">Repeat</keyword>
<keyword id="KW-0964">Secreted</keyword>
<keyword id="KW-0722">Serine protease inhibitor</keyword>
<keyword id="KW-0800">Toxin</keyword>
<comment type="function">
    <text evidence="3 6">Tick salivary thrombin inhibitor that plays an important part in the anti-hemostatic strategy of ticks (Probable). Is a potent and highly selective thrombin inhibitor (Ki=10 pM) (PubMed:8947023).</text>
</comment>
<comment type="subcellular location">
    <subcellularLocation>
        <location evidence="1">Cytoplasmic vesicle</location>
        <location evidence="1">Secretory vesicle</location>
    </subcellularLocation>
    <subcellularLocation>
        <location evidence="5">Secreted</location>
    </subcellularLocation>
</comment>
<comment type="tissue specificity">
    <text evidence="6">Expressed in salivary glands.</text>
</comment>
<comment type="domain">
    <text evidence="6">Has two domains of the BPTI family. The N-terminal domain bind to the active site of thrombin, the C-terminal domain binds at the fibrinogen recognition exosite.</text>
</comment>
<proteinExistence type="evidence at protein level"/>
<organism>
    <name type="scientific">Ornithodoros moubata</name>
    <name type="common">Soft tick</name>
    <name type="synonym">Argasid tick</name>
    <dbReference type="NCBI Taxonomy" id="6938"/>
    <lineage>
        <taxon>Eukaryota</taxon>
        <taxon>Metazoa</taxon>
        <taxon>Ecdysozoa</taxon>
        <taxon>Arthropoda</taxon>
        <taxon>Chelicerata</taxon>
        <taxon>Arachnida</taxon>
        <taxon>Acari</taxon>
        <taxon>Parasitiformes</taxon>
        <taxon>Ixodida</taxon>
        <taxon>Ixodoidea</taxon>
        <taxon>Argasidae</taxon>
        <taxon>Ornithodorinae</taxon>
        <taxon>Ornithodoros</taxon>
    </lineage>
</organism>
<protein>
    <recommendedName>
        <fullName evidence="4">Ornithodorin</fullName>
    </recommendedName>
    <alternativeName>
        <fullName evidence="4">Thrombin inhibitor</fullName>
    </alternativeName>
</protein>
<reference key="1">
    <citation type="journal article" date="1996" name="EMBO J.">
        <title>The ornithodorin-thrombin crystal structure, a key to the TAP enigma?</title>
        <authorList>
            <person name="van de Locht A."/>
            <person name="Stubbs M.T."/>
            <person name="Bode W."/>
            <person name="Friedrich T."/>
            <person name="Bollschweiler C."/>
            <person name="Hoffken W."/>
            <person name="Huber R."/>
        </authorList>
    </citation>
    <scope>X-RAY CRYSTALLOGRAPHY (3.1 ANGSTROMS) IN COMPLEX WITH THROMBIN</scope>
    <scope>RECOMBINANT EXPRESSION</scope>
    <scope>DISULFIDE BONDS</scope>
</reference>
<sequence length="119" mass="12632">LNVLCNNPHTADCNNDAQVDRYFREGTTCLMSPACTSEGYASQHECQQACFVGGEDHSSEMHSSCLGDPPTSCAEGTDITYYDSDSKTCKVLAASCPSGENTFESEVECQVACGAPIEG</sequence>
<name>KUNI_ORNMO</name>
<dbReference type="PDB" id="1TOC">
    <property type="method" value="X-ray"/>
    <property type="resolution" value="3.10 A"/>
    <property type="chains" value="R/S/T/U=1-119"/>
</dbReference>
<dbReference type="PDBsum" id="1TOC"/>
<dbReference type="SMR" id="P56409"/>
<dbReference type="MEROPS" id="I02.024"/>
<dbReference type="MEROPS" id="I02.032"/>
<dbReference type="EvolutionaryTrace" id="P56409"/>
<dbReference type="GO" id="GO:0005576">
    <property type="term" value="C:extracellular region"/>
    <property type="evidence" value="ECO:0007669"/>
    <property type="project" value="UniProtKB-SubCell"/>
</dbReference>
<dbReference type="GO" id="GO:0030133">
    <property type="term" value="C:transport vesicle"/>
    <property type="evidence" value="ECO:0007669"/>
    <property type="project" value="UniProtKB-SubCell"/>
</dbReference>
<dbReference type="GO" id="GO:0004867">
    <property type="term" value="F:serine-type endopeptidase inhibitor activity"/>
    <property type="evidence" value="ECO:0007669"/>
    <property type="project" value="UniProtKB-KW"/>
</dbReference>
<dbReference type="GO" id="GO:0090729">
    <property type="term" value="F:toxin activity"/>
    <property type="evidence" value="ECO:0007669"/>
    <property type="project" value="UniProtKB-KW"/>
</dbReference>
<dbReference type="CDD" id="cd22612">
    <property type="entry name" value="Kunitz_ornithodorin_C-like"/>
    <property type="match status" value="1"/>
</dbReference>
<dbReference type="CDD" id="cd21630">
    <property type="entry name" value="Kunitz_TAP-like"/>
    <property type="match status" value="1"/>
</dbReference>
<dbReference type="Gene3D" id="4.10.410.10">
    <property type="entry name" value="Pancreatic trypsin inhibitor Kunitz domain"/>
    <property type="match status" value="2"/>
</dbReference>
<dbReference type="InterPro" id="IPR036880">
    <property type="entry name" value="Kunitz_BPTI_sf"/>
</dbReference>
<dbReference type="SUPFAM" id="SSF57362">
    <property type="entry name" value="BPTI-like"/>
    <property type="match status" value="2"/>
</dbReference>
<evidence type="ECO:0000250" key="1">
    <source>
        <dbReference type="UniProtKB" id="Q8MVZ2"/>
    </source>
</evidence>
<evidence type="ECO:0000255" key="2">
    <source>
        <dbReference type="PROSITE-ProRule" id="PRU00031"/>
    </source>
</evidence>
<evidence type="ECO:0000269" key="3">
    <source>
    </source>
</evidence>
<evidence type="ECO:0000303" key="4">
    <source>
    </source>
</evidence>
<evidence type="ECO:0000305" key="5"/>
<evidence type="ECO:0000305" key="6">
    <source>
    </source>
</evidence>
<evidence type="ECO:0007744" key="7">
    <source>
        <dbReference type="PDB" id="1TOC"/>
    </source>
</evidence>
<evidence type="ECO:0007829" key="8">
    <source>
        <dbReference type="PDB" id="1TOC"/>
    </source>
</evidence>